<name>TX135_LYCSI</name>
<accession>B6DCM4</accession>
<evidence type="ECO:0000250" key="1"/>
<evidence type="ECO:0000255" key="2"/>
<evidence type="ECO:0000305" key="3"/>
<dbReference type="EMBL" id="EU925958">
    <property type="protein sequence ID" value="ACI41290.1"/>
    <property type="molecule type" value="mRNA"/>
</dbReference>
<dbReference type="EMBL" id="FM863962">
    <property type="protein sequence ID" value="CAS03560.1"/>
    <property type="molecule type" value="mRNA"/>
</dbReference>
<dbReference type="SMR" id="B6DCM4"/>
<dbReference type="TCDB" id="8.B.19.2.3">
    <property type="family name" value="the sea anemone k+ channel blocker toxin, bcstx3 (bcstx3) family"/>
</dbReference>
<dbReference type="ArachnoServer" id="AS000907">
    <property type="toxin name" value="U1-lycotoxin-Ls1t"/>
</dbReference>
<dbReference type="GO" id="GO:0005576">
    <property type="term" value="C:extracellular region"/>
    <property type="evidence" value="ECO:0007669"/>
    <property type="project" value="UniProtKB-SubCell"/>
</dbReference>
<dbReference type="GO" id="GO:0090729">
    <property type="term" value="F:toxin activity"/>
    <property type="evidence" value="ECO:0007669"/>
    <property type="project" value="UniProtKB-KW"/>
</dbReference>
<dbReference type="InterPro" id="IPR019553">
    <property type="entry name" value="Spider_toxin_CSTX_knottin"/>
</dbReference>
<dbReference type="InterPro" id="IPR011142">
    <property type="entry name" value="Spider_toxin_CSTX_Knottin_CS"/>
</dbReference>
<dbReference type="Pfam" id="PF10530">
    <property type="entry name" value="Toxin_35"/>
    <property type="match status" value="1"/>
</dbReference>
<dbReference type="PROSITE" id="PS60029">
    <property type="entry name" value="SPIDER_CSTX"/>
    <property type="match status" value="1"/>
</dbReference>
<reference key="1">
    <citation type="journal article" date="2010" name="Zoology">
        <title>Transcriptome analysis of the venom glands of the Chinese wolf spider Lycosa singoriensis.</title>
        <authorList>
            <person name="Zhang Y."/>
            <person name="Chen J."/>
            <person name="Tang X."/>
            <person name="Wang F."/>
            <person name="Jiang L."/>
            <person name="Xiong X."/>
            <person name="Wang M."/>
            <person name="Rong M."/>
            <person name="Liu Z."/>
            <person name="Liang S."/>
        </authorList>
    </citation>
    <scope>NUCLEOTIDE SEQUENCE [LARGE SCALE MRNA]</scope>
    <source>
        <tissue>Venom gland</tissue>
    </source>
</reference>
<protein>
    <recommendedName>
        <fullName>U1-lycotoxin-Ls1t</fullName>
    </recommendedName>
    <alternativeName>
        <fullName>Toxin-like structure LSTX-A35</fullName>
    </alternativeName>
</protein>
<proteinExistence type="evidence at transcript level"/>
<keyword id="KW-1015">Disulfide bond</keyword>
<keyword id="KW-0960">Knottin</keyword>
<keyword id="KW-0964">Secreted</keyword>
<keyword id="KW-0732">Signal</keyword>
<keyword id="KW-0800">Toxin</keyword>
<comment type="subcellular location">
    <subcellularLocation>
        <location evidence="1">Secreted</location>
    </subcellularLocation>
</comment>
<comment type="tissue specificity">
    <text>Expressed by the venom gland.</text>
</comment>
<comment type="domain">
    <text evidence="1">The presence of a 'disulfide through disulfide knot' structurally defines this protein as a knottin.</text>
</comment>
<comment type="similarity">
    <text evidence="3">Belongs to the neurotoxin 19 (CSTX) family. 04 (U1-Lctx) subfamily.</text>
</comment>
<feature type="signal peptide" evidence="2">
    <location>
        <begin position="1"/>
        <end position="20"/>
    </location>
</feature>
<feature type="propeptide" id="PRO_0000401565" evidence="1">
    <location>
        <begin position="21"/>
        <end position="41"/>
    </location>
</feature>
<feature type="chain" id="PRO_0000401566" description="U1-lycotoxin-Ls1t">
    <location>
        <begin position="42"/>
        <end position="107"/>
    </location>
</feature>
<feature type="disulfide bond" evidence="1">
    <location>
        <begin position="44"/>
        <end position="59"/>
    </location>
</feature>
<feature type="disulfide bond" evidence="1">
    <location>
        <begin position="51"/>
        <end position="68"/>
    </location>
</feature>
<feature type="disulfide bond" evidence="1">
    <location>
        <begin position="58"/>
        <end position="86"/>
    </location>
</feature>
<feature type="disulfide bond" evidence="1">
    <location>
        <begin position="70"/>
        <end position="84"/>
    </location>
</feature>
<sequence length="107" mass="11883">MMKVLVVVALLVTLISYSSSEGIDDLEADELLSLMANEQTRKECIPKHHECTSDKHGCCRGNFFKYKCQCTTVVTQDGEQTERCFCGTPPHHKAAELVVGFGKKIFG</sequence>
<organism>
    <name type="scientific">Lycosa singoriensis</name>
    <name type="common">Wolf spider</name>
    <name type="synonym">Aranea singoriensis</name>
    <dbReference type="NCBI Taxonomy" id="434756"/>
    <lineage>
        <taxon>Eukaryota</taxon>
        <taxon>Metazoa</taxon>
        <taxon>Ecdysozoa</taxon>
        <taxon>Arthropoda</taxon>
        <taxon>Chelicerata</taxon>
        <taxon>Arachnida</taxon>
        <taxon>Araneae</taxon>
        <taxon>Araneomorphae</taxon>
        <taxon>Entelegynae</taxon>
        <taxon>Lycosoidea</taxon>
        <taxon>Lycosidae</taxon>
        <taxon>Lycosa</taxon>
    </lineage>
</organism>